<dbReference type="EC" id="3.5.1.88" evidence="1"/>
<dbReference type="EMBL" id="CR848038">
    <property type="protein sequence ID" value="CAH63757.1"/>
    <property type="molecule type" value="Genomic_DNA"/>
</dbReference>
<dbReference type="RefSeq" id="WP_011096972.1">
    <property type="nucleotide sequence ID" value="NC_004552.2"/>
</dbReference>
<dbReference type="SMR" id="Q5L6G8"/>
<dbReference type="GeneID" id="93024862"/>
<dbReference type="KEGG" id="cab:CAB307"/>
<dbReference type="eggNOG" id="COG0242">
    <property type="taxonomic scope" value="Bacteria"/>
</dbReference>
<dbReference type="HOGENOM" id="CLU_061901_2_0_0"/>
<dbReference type="OrthoDB" id="9784988at2"/>
<dbReference type="Proteomes" id="UP000001012">
    <property type="component" value="Chromosome"/>
</dbReference>
<dbReference type="GO" id="GO:0046872">
    <property type="term" value="F:metal ion binding"/>
    <property type="evidence" value="ECO:0007669"/>
    <property type="project" value="UniProtKB-KW"/>
</dbReference>
<dbReference type="GO" id="GO:0042586">
    <property type="term" value="F:peptide deformylase activity"/>
    <property type="evidence" value="ECO:0007669"/>
    <property type="project" value="UniProtKB-UniRule"/>
</dbReference>
<dbReference type="GO" id="GO:0043686">
    <property type="term" value="P:co-translational protein modification"/>
    <property type="evidence" value="ECO:0007669"/>
    <property type="project" value="TreeGrafter"/>
</dbReference>
<dbReference type="GO" id="GO:0006412">
    <property type="term" value="P:translation"/>
    <property type="evidence" value="ECO:0007669"/>
    <property type="project" value="UniProtKB-UniRule"/>
</dbReference>
<dbReference type="CDD" id="cd00487">
    <property type="entry name" value="Pep_deformylase"/>
    <property type="match status" value="1"/>
</dbReference>
<dbReference type="Gene3D" id="3.90.45.10">
    <property type="entry name" value="Peptide deformylase"/>
    <property type="match status" value="1"/>
</dbReference>
<dbReference type="HAMAP" id="MF_00163">
    <property type="entry name" value="Pep_deformylase"/>
    <property type="match status" value="1"/>
</dbReference>
<dbReference type="InterPro" id="IPR023635">
    <property type="entry name" value="Peptide_deformylase"/>
</dbReference>
<dbReference type="InterPro" id="IPR036821">
    <property type="entry name" value="Peptide_deformylase_sf"/>
</dbReference>
<dbReference type="NCBIfam" id="TIGR00079">
    <property type="entry name" value="pept_deformyl"/>
    <property type="match status" value="1"/>
</dbReference>
<dbReference type="NCBIfam" id="NF001159">
    <property type="entry name" value="PRK00150.1-3"/>
    <property type="match status" value="1"/>
</dbReference>
<dbReference type="PANTHER" id="PTHR10458">
    <property type="entry name" value="PEPTIDE DEFORMYLASE"/>
    <property type="match status" value="1"/>
</dbReference>
<dbReference type="PANTHER" id="PTHR10458:SF22">
    <property type="entry name" value="PEPTIDE DEFORMYLASE"/>
    <property type="match status" value="1"/>
</dbReference>
<dbReference type="Pfam" id="PF01327">
    <property type="entry name" value="Pep_deformylase"/>
    <property type="match status" value="1"/>
</dbReference>
<dbReference type="PIRSF" id="PIRSF004749">
    <property type="entry name" value="Pep_def"/>
    <property type="match status" value="1"/>
</dbReference>
<dbReference type="PRINTS" id="PR01576">
    <property type="entry name" value="PDEFORMYLASE"/>
</dbReference>
<dbReference type="SUPFAM" id="SSF56420">
    <property type="entry name" value="Peptide deformylase"/>
    <property type="match status" value="1"/>
</dbReference>
<accession>Q5L6G8</accession>
<name>DEF_CHLAB</name>
<sequence>MIRELEYYGSPTLRRKAEAILEITDEIRQLAQDMYETMVAHKGVGLAAPQVGESVSLFVMCVEGETEDGDLIFCDFPKVYINPVLSNVSEDLVLGREGCLSIPGLRADVYRPRSITVKAINLDGQEFTEHLEGFPARIVMHENDHLNGILYIDKMEEPKDYKKFKSALEKIRRRYNNHITDKAS</sequence>
<comment type="function">
    <text evidence="1">Removes the formyl group from the N-terminal Met of newly synthesized proteins. Requires at least a dipeptide for an efficient rate of reaction. N-terminal L-methionine is a prerequisite for activity but the enzyme has broad specificity at other positions.</text>
</comment>
<comment type="catalytic activity">
    <reaction evidence="1">
        <text>N-terminal N-formyl-L-methionyl-[peptide] + H2O = N-terminal L-methionyl-[peptide] + formate</text>
        <dbReference type="Rhea" id="RHEA:24420"/>
        <dbReference type="Rhea" id="RHEA-COMP:10639"/>
        <dbReference type="Rhea" id="RHEA-COMP:10640"/>
        <dbReference type="ChEBI" id="CHEBI:15377"/>
        <dbReference type="ChEBI" id="CHEBI:15740"/>
        <dbReference type="ChEBI" id="CHEBI:49298"/>
        <dbReference type="ChEBI" id="CHEBI:64731"/>
        <dbReference type="EC" id="3.5.1.88"/>
    </reaction>
</comment>
<comment type="cofactor">
    <cofactor evidence="1">
        <name>Fe(2+)</name>
        <dbReference type="ChEBI" id="CHEBI:29033"/>
    </cofactor>
    <text evidence="1">Binds 1 Fe(2+) ion.</text>
</comment>
<comment type="similarity">
    <text evidence="1">Belongs to the polypeptide deformylase family.</text>
</comment>
<protein>
    <recommendedName>
        <fullName evidence="1">Peptide deformylase</fullName>
        <shortName evidence="1">PDF</shortName>
        <ecNumber evidence="1">3.5.1.88</ecNumber>
    </recommendedName>
    <alternativeName>
        <fullName evidence="1">Polypeptide deformylase</fullName>
    </alternativeName>
</protein>
<evidence type="ECO:0000255" key="1">
    <source>
        <dbReference type="HAMAP-Rule" id="MF_00163"/>
    </source>
</evidence>
<gene>
    <name evidence="1" type="primary">def</name>
    <name type="ordered locus">CAB307</name>
</gene>
<proteinExistence type="inferred from homology"/>
<reference key="1">
    <citation type="journal article" date="2005" name="Genome Res.">
        <title>The Chlamydophila abortus genome sequence reveals an array of variable proteins that contribute to interspecies variation.</title>
        <authorList>
            <person name="Thomson N.R."/>
            <person name="Yeats C."/>
            <person name="Bell K."/>
            <person name="Holden M.T.G."/>
            <person name="Bentley S.D."/>
            <person name="Livingstone M."/>
            <person name="Cerdeno-Tarraga A.-M."/>
            <person name="Harris B."/>
            <person name="Doggett J."/>
            <person name="Ormond D."/>
            <person name="Mungall K."/>
            <person name="Clarke K."/>
            <person name="Feltwell T."/>
            <person name="Hance Z."/>
            <person name="Sanders M."/>
            <person name="Quail M.A."/>
            <person name="Price C."/>
            <person name="Barrell B.G."/>
            <person name="Parkhill J."/>
            <person name="Longbottom D."/>
        </authorList>
    </citation>
    <scope>NUCLEOTIDE SEQUENCE [LARGE SCALE GENOMIC DNA]</scope>
    <source>
        <strain>DSM 27085 / S26/3</strain>
    </source>
</reference>
<keyword id="KW-0378">Hydrolase</keyword>
<keyword id="KW-0408">Iron</keyword>
<keyword id="KW-0479">Metal-binding</keyword>
<keyword id="KW-0648">Protein biosynthesis</keyword>
<organism>
    <name type="scientific">Chlamydia abortus (strain DSM 27085 / S26/3)</name>
    <name type="common">Chlamydophila abortus</name>
    <dbReference type="NCBI Taxonomy" id="218497"/>
    <lineage>
        <taxon>Bacteria</taxon>
        <taxon>Pseudomonadati</taxon>
        <taxon>Chlamydiota</taxon>
        <taxon>Chlamydiia</taxon>
        <taxon>Chlamydiales</taxon>
        <taxon>Chlamydiaceae</taxon>
        <taxon>Chlamydia/Chlamydophila group</taxon>
        <taxon>Chlamydia</taxon>
    </lineage>
</organism>
<feature type="chain" id="PRO_0000301017" description="Peptide deformylase">
    <location>
        <begin position="1"/>
        <end position="184"/>
    </location>
</feature>
<feature type="active site" evidence="1">
    <location>
        <position position="142"/>
    </location>
</feature>
<feature type="binding site" evidence="1">
    <location>
        <position position="99"/>
    </location>
    <ligand>
        <name>Fe cation</name>
        <dbReference type="ChEBI" id="CHEBI:24875"/>
    </ligand>
</feature>
<feature type="binding site" evidence="1">
    <location>
        <position position="141"/>
    </location>
    <ligand>
        <name>Fe cation</name>
        <dbReference type="ChEBI" id="CHEBI:24875"/>
    </ligand>
</feature>
<feature type="binding site" evidence="1">
    <location>
        <position position="145"/>
    </location>
    <ligand>
        <name>Fe cation</name>
        <dbReference type="ChEBI" id="CHEBI:24875"/>
    </ligand>
</feature>